<accession>Q4R871</accession>
<organism>
    <name type="scientific">Macaca fascicularis</name>
    <name type="common">Crab-eating macaque</name>
    <name type="synonym">Cynomolgus monkey</name>
    <dbReference type="NCBI Taxonomy" id="9541"/>
    <lineage>
        <taxon>Eukaryota</taxon>
        <taxon>Metazoa</taxon>
        <taxon>Chordata</taxon>
        <taxon>Craniata</taxon>
        <taxon>Vertebrata</taxon>
        <taxon>Euteleostomi</taxon>
        <taxon>Mammalia</taxon>
        <taxon>Eutheria</taxon>
        <taxon>Euarchontoglires</taxon>
        <taxon>Primates</taxon>
        <taxon>Haplorrhini</taxon>
        <taxon>Catarrhini</taxon>
        <taxon>Cercopithecidae</taxon>
        <taxon>Cercopithecinae</taxon>
        <taxon>Macaca</taxon>
    </lineage>
</organism>
<evidence type="ECO:0000305" key="1"/>
<gene>
    <name type="primary">CCNYL2</name>
    <name type="ORF">QtsA-13245</name>
</gene>
<reference key="1">
    <citation type="submission" date="2005-06" db="EMBL/GenBank/DDBJ databases">
        <title>DNA sequences of macaque genes expressed in brain or testis and its evolutionary implications.</title>
        <authorList>
            <consortium name="International consortium for macaque cDNA sequencing and analysis"/>
        </authorList>
    </citation>
    <scope>NUCLEOTIDE SEQUENCE [LARGE SCALE MRNA]</scope>
    <source>
        <tissue>Testis</tissue>
    </source>
</reference>
<dbReference type="EMBL" id="AB168587">
    <property type="protein sequence ID" value="BAE00701.1"/>
    <property type="molecule type" value="mRNA"/>
</dbReference>
<dbReference type="RefSeq" id="NP_001274555.1">
    <property type="nucleotide sequence ID" value="NM_001287626.1"/>
</dbReference>
<dbReference type="SMR" id="Q4R871"/>
<dbReference type="STRING" id="9541.ENSMFAP00000030546"/>
<dbReference type="VEuPathDB" id="HostDB:ENSMFAG00000042465"/>
<dbReference type="eggNOG" id="KOG1675">
    <property type="taxonomic scope" value="Eukaryota"/>
</dbReference>
<dbReference type="OMA" id="CHCESEI"/>
<dbReference type="Proteomes" id="UP000233100">
    <property type="component" value="Chromosome 9"/>
</dbReference>
<dbReference type="GO" id="GO:0019901">
    <property type="term" value="F:protein kinase binding"/>
    <property type="evidence" value="ECO:0007669"/>
    <property type="project" value="InterPro"/>
</dbReference>
<dbReference type="CDD" id="cd20540">
    <property type="entry name" value="CYCLIN_CCNY_like"/>
    <property type="match status" value="1"/>
</dbReference>
<dbReference type="FunFam" id="1.10.472.10:FF:000123">
    <property type="entry name" value="Cyclin-Y-like protein 2"/>
    <property type="match status" value="1"/>
</dbReference>
<dbReference type="Gene3D" id="1.10.472.10">
    <property type="entry name" value="Cyclin-like"/>
    <property type="match status" value="1"/>
</dbReference>
<dbReference type="InterPro" id="IPR013763">
    <property type="entry name" value="Cyclin-like_dom"/>
</dbReference>
<dbReference type="InterPro" id="IPR036915">
    <property type="entry name" value="Cyclin-like_sf"/>
</dbReference>
<dbReference type="InterPro" id="IPR013922">
    <property type="entry name" value="Cyclin_PHO80-like"/>
</dbReference>
<dbReference type="InterPro" id="IPR012399">
    <property type="entry name" value="Cyclin_Y"/>
</dbReference>
<dbReference type="PANTHER" id="PTHR14248">
    <property type="entry name" value="CYCLIN Y, ISOFORM A"/>
    <property type="match status" value="1"/>
</dbReference>
<dbReference type="Pfam" id="PF08613">
    <property type="entry name" value="Cyclin"/>
    <property type="match status" value="1"/>
</dbReference>
<dbReference type="PIRSF" id="PIRSF028934">
    <property type="entry name" value="Cyclin_CG14939"/>
    <property type="match status" value="1"/>
</dbReference>
<dbReference type="SMART" id="SM00385">
    <property type="entry name" value="CYCLIN"/>
    <property type="match status" value="1"/>
</dbReference>
<dbReference type="SUPFAM" id="SSF47954">
    <property type="entry name" value="Cyclin-like"/>
    <property type="match status" value="1"/>
</dbReference>
<comment type="similarity">
    <text evidence="1">Belongs to the cyclin family. Cyclin Y subfamily.</text>
</comment>
<protein>
    <recommendedName>
        <fullName>Cyclin-Y-like protein 2</fullName>
    </recommendedName>
</protein>
<feature type="chain" id="PRO_0000311817" description="Cyclin-Y-like protein 2">
    <location>
        <begin position="1"/>
        <end position="360"/>
    </location>
</feature>
<feature type="domain" description="Cyclin N-terminal">
    <location>
        <begin position="204"/>
        <end position="286"/>
    </location>
</feature>
<keyword id="KW-0195">Cyclin</keyword>
<keyword id="KW-1185">Reference proteome</keyword>
<name>CCYL2_MACFA</name>
<sequence>MGNIMTCCVCPRASPELDQHQGSVCPCGSEIYKAAAGDMIAGVPVAAAVEPGEVTFEAGEGLHVHHICEREMPEDIPLESNSSDHPKASTIFLRKSQTDVQEKRKSNYTKHVSTERFTQQYSSCSTIFLDDSTASQPHLTMTLKSVTLAIYYHIKQRDADRSLGIFDERLHPLTREEVLEEYFKYDPEHKFIFRFVRTLFKAIRLTAEFAIVSLIYIERLVSYADIDICPTNWKRIVLGAILLASKVWSDMAVWNEDYCKLFENITVEEMNELERQFLKLINYNIGVTGSVYSRFYFDLRSLAHDNGLYSPVYLLDRERAWKLEAFSRMEQYKVFYSAAKNGSLSAEDLIHLQRAKAILF</sequence>
<proteinExistence type="evidence at transcript level"/>